<keyword id="KW-0456">Lyase</keyword>
<name>Y2233_BORPD</name>
<proteinExistence type="inferred from homology"/>
<reference key="1">
    <citation type="journal article" date="2008" name="BMC Genomics">
        <title>The missing link: Bordetella petrii is endowed with both the metabolic versatility of environmental bacteria and virulence traits of pathogenic Bordetellae.</title>
        <authorList>
            <person name="Gross R."/>
            <person name="Guzman C.A."/>
            <person name="Sebaihia M."/>
            <person name="Martin dos Santos V.A.P."/>
            <person name="Pieper D.H."/>
            <person name="Koebnik R."/>
            <person name="Lechner M."/>
            <person name="Bartels D."/>
            <person name="Buhrmester J."/>
            <person name="Choudhuri J.V."/>
            <person name="Ebensen T."/>
            <person name="Gaigalat L."/>
            <person name="Herrmann S."/>
            <person name="Khachane A.N."/>
            <person name="Larisch C."/>
            <person name="Link S."/>
            <person name="Linke B."/>
            <person name="Meyer F."/>
            <person name="Mormann S."/>
            <person name="Nakunst D."/>
            <person name="Rueckert C."/>
            <person name="Schneiker-Bekel S."/>
            <person name="Schulze K."/>
            <person name="Voerholter F.-J."/>
            <person name="Yevsa T."/>
            <person name="Engle J.T."/>
            <person name="Goldman W.E."/>
            <person name="Puehler A."/>
            <person name="Goebel U.B."/>
            <person name="Goesmann A."/>
            <person name="Bloecker H."/>
            <person name="Kaiser O."/>
            <person name="Martinez-Arias R."/>
        </authorList>
    </citation>
    <scope>NUCLEOTIDE SEQUENCE [LARGE SCALE GENOMIC DNA]</scope>
    <source>
        <strain>ATCC BAA-461 / DSM 12804 / CCUG 43448</strain>
    </source>
</reference>
<feature type="chain" id="PRO_0000379820" description="Putative hydro-lyase Bpet2233">
    <location>
        <begin position="1"/>
        <end position="264"/>
    </location>
</feature>
<protein>
    <recommendedName>
        <fullName evidence="1">Putative hydro-lyase Bpet2233</fullName>
        <ecNumber evidence="1">4.2.1.-</ecNumber>
    </recommendedName>
</protein>
<accession>A9ILF0</accession>
<comment type="similarity">
    <text evidence="1">Belongs to the D-glutamate cyclase family.</text>
</comment>
<dbReference type="EC" id="4.2.1.-" evidence="1"/>
<dbReference type="EMBL" id="AM902716">
    <property type="protein sequence ID" value="CAP42576.1"/>
    <property type="molecule type" value="Genomic_DNA"/>
</dbReference>
<dbReference type="SMR" id="A9ILF0"/>
<dbReference type="STRING" id="94624.Bpet2233"/>
<dbReference type="KEGG" id="bpt:Bpet2233"/>
<dbReference type="eggNOG" id="COG4336">
    <property type="taxonomic scope" value="Bacteria"/>
</dbReference>
<dbReference type="Proteomes" id="UP000001225">
    <property type="component" value="Chromosome"/>
</dbReference>
<dbReference type="GO" id="GO:0016829">
    <property type="term" value="F:lyase activity"/>
    <property type="evidence" value="ECO:0007669"/>
    <property type="project" value="UniProtKB-KW"/>
</dbReference>
<dbReference type="FunFam" id="3.30.2040.10:FF:000001">
    <property type="entry name" value="D-glutamate cyclase, mitochondrial"/>
    <property type="match status" value="1"/>
</dbReference>
<dbReference type="Gene3D" id="3.40.1640.10">
    <property type="entry name" value="PSTPO5379-like"/>
    <property type="match status" value="1"/>
</dbReference>
<dbReference type="Gene3D" id="3.30.2040.10">
    <property type="entry name" value="PSTPO5379-like domain"/>
    <property type="match status" value="1"/>
</dbReference>
<dbReference type="HAMAP" id="MF_01830">
    <property type="entry name" value="Hydro_lyase"/>
    <property type="match status" value="1"/>
</dbReference>
<dbReference type="InterPro" id="IPR009906">
    <property type="entry name" value="D-Glu_cyclase"/>
</dbReference>
<dbReference type="InterPro" id="IPR038021">
    <property type="entry name" value="Putative_hydro-lyase"/>
</dbReference>
<dbReference type="InterPro" id="IPR016938">
    <property type="entry name" value="UPF0317"/>
</dbReference>
<dbReference type="NCBIfam" id="NF003969">
    <property type="entry name" value="PRK05463.1"/>
    <property type="match status" value="1"/>
</dbReference>
<dbReference type="PANTHER" id="PTHR32022">
    <property type="entry name" value="D-GLUTAMATE CYCLASE, MITOCHONDRIAL"/>
    <property type="match status" value="1"/>
</dbReference>
<dbReference type="PANTHER" id="PTHR32022:SF10">
    <property type="entry name" value="D-GLUTAMATE CYCLASE, MITOCHONDRIAL"/>
    <property type="match status" value="1"/>
</dbReference>
<dbReference type="Pfam" id="PF07286">
    <property type="entry name" value="D-Glu_cyclase"/>
    <property type="match status" value="1"/>
</dbReference>
<dbReference type="PIRSF" id="PIRSF029755">
    <property type="entry name" value="UCP029755"/>
    <property type="match status" value="1"/>
</dbReference>
<dbReference type="SUPFAM" id="SSF160920">
    <property type="entry name" value="PSTPO5379-like"/>
    <property type="match status" value="1"/>
</dbReference>
<gene>
    <name type="ordered locus">Bpet2233</name>
</gene>
<evidence type="ECO:0000255" key="1">
    <source>
        <dbReference type="HAMAP-Rule" id="MF_01830"/>
    </source>
</evidence>
<organism>
    <name type="scientific">Bordetella petrii (strain ATCC BAA-461 / DSM 12804 / CCUG 43448)</name>
    <dbReference type="NCBI Taxonomy" id="340100"/>
    <lineage>
        <taxon>Bacteria</taxon>
        <taxon>Pseudomonadati</taxon>
        <taxon>Pseudomonadota</taxon>
        <taxon>Betaproteobacteria</taxon>
        <taxon>Burkholderiales</taxon>
        <taxon>Alcaligenaceae</taxon>
        <taxon>Bordetella</taxon>
    </lineage>
</organism>
<sequence length="264" mass="28510">MTHTPQSGTAYRARLEARAGRLAGPTANLAPGHVQANLAILPADVAGDFLRFCQRNPKPCPLLAVSEPGDPALPSLGHDIDVRSDIPRYRVWRDGQLAGEPTDVRDLWRDDLVAFLIGCSFSFEEAMLDNGLPVRHIEQGCNVPMYRTSIPTEPAGPFRGPLVVSMRPLKAADAIRAIQVTSRFPSVHGAPVHLGDPAQIGIADINRPDYGDAVEIRPGEIPVFWACGVTPQSVVAAVRPKFCITHAPGHMLVTDLLNSRMAVL</sequence>